<dbReference type="EC" id="3.6.5.3" evidence="2"/>
<dbReference type="EMBL" id="X77033">
    <property type="protein sequence ID" value="CAA54322.1"/>
    <property type="molecule type" value="Genomic_DNA"/>
</dbReference>
<dbReference type="EMBL" id="CP001099">
    <property type="protein sequence ID" value="ACF10602.1"/>
    <property type="molecule type" value="Genomic_DNA"/>
</dbReference>
<dbReference type="RefSeq" id="WP_012501437.1">
    <property type="nucleotide sequence ID" value="NC_011027.1"/>
</dbReference>
<dbReference type="SMR" id="P42473"/>
<dbReference type="STRING" id="517417.Cpar_0175"/>
<dbReference type="KEGG" id="cpc:Cpar_0175"/>
<dbReference type="eggNOG" id="COG0050">
    <property type="taxonomic scope" value="Bacteria"/>
</dbReference>
<dbReference type="HOGENOM" id="CLU_007265_0_0_10"/>
<dbReference type="OrthoDB" id="9804504at2"/>
<dbReference type="Proteomes" id="UP000008811">
    <property type="component" value="Chromosome"/>
</dbReference>
<dbReference type="GO" id="GO:0005829">
    <property type="term" value="C:cytosol"/>
    <property type="evidence" value="ECO:0007669"/>
    <property type="project" value="TreeGrafter"/>
</dbReference>
<dbReference type="GO" id="GO:0005525">
    <property type="term" value="F:GTP binding"/>
    <property type="evidence" value="ECO:0007669"/>
    <property type="project" value="UniProtKB-UniRule"/>
</dbReference>
<dbReference type="GO" id="GO:0003924">
    <property type="term" value="F:GTPase activity"/>
    <property type="evidence" value="ECO:0007669"/>
    <property type="project" value="InterPro"/>
</dbReference>
<dbReference type="GO" id="GO:0003746">
    <property type="term" value="F:translation elongation factor activity"/>
    <property type="evidence" value="ECO:0007669"/>
    <property type="project" value="UniProtKB-UniRule"/>
</dbReference>
<dbReference type="CDD" id="cd01884">
    <property type="entry name" value="EF_Tu"/>
    <property type="match status" value="1"/>
</dbReference>
<dbReference type="CDD" id="cd03697">
    <property type="entry name" value="EFTU_II"/>
    <property type="match status" value="1"/>
</dbReference>
<dbReference type="CDD" id="cd03707">
    <property type="entry name" value="EFTU_III"/>
    <property type="match status" value="1"/>
</dbReference>
<dbReference type="FunFam" id="2.40.30.10:FF:000001">
    <property type="entry name" value="Elongation factor Tu"/>
    <property type="match status" value="1"/>
</dbReference>
<dbReference type="FunFam" id="3.40.50.300:FF:000003">
    <property type="entry name" value="Elongation factor Tu"/>
    <property type="match status" value="1"/>
</dbReference>
<dbReference type="Gene3D" id="3.40.50.300">
    <property type="entry name" value="P-loop containing nucleotide triphosphate hydrolases"/>
    <property type="match status" value="1"/>
</dbReference>
<dbReference type="Gene3D" id="2.40.30.10">
    <property type="entry name" value="Translation factors"/>
    <property type="match status" value="2"/>
</dbReference>
<dbReference type="HAMAP" id="MF_00118_B">
    <property type="entry name" value="EF_Tu_B"/>
    <property type="match status" value="1"/>
</dbReference>
<dbReference type="InterPro" id="IPR041709">
    <property type="entry name" value="EF-Tu_GTP-bd"/>
</dbReference>
<dbReference type="InterPro" id="IPR050055">
    <property type="entry name" value="EF-Tu_GTPase"/>
</dbReference>
<dbReference type="InterPro" id="IPR004161">
    <property type="entry name" value="EFTu-like_2"/>
</dbReference>
<dbReference type="InterPro" id="IPR033720">
    <property type="entry name" value="EFTU_2"/>
</dbReference>
<dbReference type="InterPro" id="IPR031157">
    <property type="entry name" value="G_TR_CS"/>
</dbReference>
<dbReference type="InterPro" id="IPR027417">
    <property type="entry name" value="P-loop_NTPase"/>
</dbReference>
<dbReference type="InterPro" id="IPR005225">
    <property type="entry name" value="Small_GTP-bd"/>
</dbReference>
<dbReference type="InterPro" id="IPR000795">
    <property type="entry name" value="T_Tr_GTP-bd_dom"/>
</dbReference>
<dbReference type="InterPro" id="IPR009000">
    <property type="entry name" value="Transl_B-barrel_sf"/>
</dbReference>
<dbReference type="InterPro" id="IPR009001">
    <property type="entry name" value="Transl_elong_EF1A/Init_IF2_C"/>
</dbReference>
<dbReference type="InterPro" id="IPR004541">
    <property type="entry name" value="Transl_elong_EFTu/EF1A_bac/org"/>
</dbReference>
<dbReference type="InterPro" id="IPR004160">
    <property type="entry name" value="Transl_elong_EFTu/EF1A_C"/>
</dbReference>
<dbReference type="NCBIfam" id="TIGR00485">
    <property type="entry name" value="EF-Tu"/>
    <property type="match status" value="1"/>
</dbReference>
<dbReference type="NCBIfam" id="NF000766">
    <property type="entry name" value="PRK00049.1"/>
    <property type="match status" value="1"/>
</dbReference>
<dbReference type="NCBIfam" id="NF009372">
    <property type="entry name" value="PRK12735.1"/>
    <property type="match status" value="1"/>
</dbReference>
<dbReference type="NCBIfam" id="NF009373">
    <property type="entry name" value="PRK12736.1"/>
    <property type="match status" value="1"/>
</dbReference>
<dbReference type="NCBIfam" id="TIGR00231">
    <property type="entry name" value="small_GTP"/>
    <property type="match status" value="1"/>
</dbReference>
<dbReference type="PANTHER" id="PTHR43721:SF22">
    <property type="entry name" value="ELONGATION FACTOR TU, MITOCHONDRIAL"/>
    <property type="match status" value="1"/>
</dbReference>
<dbReference type="PANTHER" id="PTHR43721">
    <property type="entry name" value="ELONGATION FACTOR TU-RELATED"/>
    <property type="match status" value="1"/>
</dbReference>
<dbReference type="Pfam" id="PF00009">
    <property type="entry name" value="GTP_EFTU"/>
    <property type="match status" value="1"/>
</dbReference>
<dbReference type="Pfam" id="PF03144">
    <property type="entry name" value="GTP_EFTU_D2"/>
    <property type="match status" value="1"/>
</dbReference>
<dbReference type="Pfam" id="PF03143">
    <property type="entry name" value="GTP_EFTU_D3"/>
    <property type="match status" value="1"/>
</dbReference>
<dbReference type="PRINTS" id="PR00315">
    <property type="entry name" value="ELONGATNFCT"/>
</dbReference>
<dbReference type="SUPFAM" id="SSF50465">
    <property type="entry name" value="EF-Tu/eEF-1alpha/eIF2-gamma C-terminal domain"/>
    <property type="match status" value="1"/>
</dbReference>
<dbReference type="SUPFAM" id="SSF52540">
    <property type="entry name" value="P-loop containing nucleoside triphosphate hydrolases"/>
    <property type="match status" value="1"/>
</dbReference>
<dbReference type="SUPFAM" id="SSF50447">
    <property type="entry name" value="Translation proteins"/>
    <property type="match status" value="1"/>
</dbReference>
<dbReference type="PROSITE" id="PS00301">
    <property type="entry name" value="G_TR_1"/>
    <property type="match status" value="1"/>
</dbReference>
<dbReference type="PROSITE" id="PS51722">
    <property type="entry name" value="G_TR_2"/>
    <property type="match status" value="1"/>
</dbReference>
<proteinExistence type="inferred from homology"/>
<evidence type="ECO:0000250" key="1"/>
<evidence type="ECO:0000255" key="2">
    <source>
        <dbReference type="HAMAP-Rule" id="MF_00118"/>
    </source>
</evidence>
<gene>
    <name evidence="2" type="primary">tuf</name>
    <name type="ordered locus">Cpar_0175</name>
</gene>
<keyword id="KW-0963">Cytoplasm</keyword>
<keyword id="KW-0251">Elongation factor</keyword>
<keyword id="KW-0342">GTP-binding</keyword>
<keyword id="KW-0378">Hydrolase</keyword>
<keyword id="KW-0460">Magnesium</keyword>
<keyword id="KW-0479">Metal-binding</keyword>
<keyword id="KW-0547">Nucleotide-binding</keyword>
<keyword id="KW-0648">Protein biosynthesis</keyword>
<feature type="chain" id="PRO_0000091311" description="Elongation factor Tu">
    <location>
        <begin position="1"/>
        <end position="393"/>
    </location>
</feature>
<feature type="domain" description="tr-type G">
    <location>
        <begin position="10"/>
        <end position="203"/>
    </location>
</feature>
<feature type="region of interest" description="G1" evidence="1">
    <location>
        <begin position="19"/>
        <end position="26"/>
    </location>
</feature>
<feature type="region of interest" description="G2" evidence="1">
    <location>
        <begin position="60"/>
        <end position="64"/>
    </location>
</feature>
<feature type="region of interest" description="G3" evidence="1">
    <location>
        <begin position="81"/>
        <end position="84"/>
    </location>
</feature>
<feature type="region of interest" description="G4" evidence="1">
    <location>
        <begin position="136"/>
        <end position="139"/>
    </location>
</feature>
<feature type="region of interest" description="G5" evidence="1">
    <location>
        <begin position="173"/>
        <end position="175"/>
    </location>
</feature>
<feature type="binding site" evidence="2">
    <location>
        <begin position="19"/>
        <end position="26"/>
    </location>
    <ligand>
        <name>GTP</name>
        <dbReference type="ChEBI" id="CHEBI:37565"/>
    </ligand>
</feature>
<feature type="binding site" evidence="2">
    <location>
        <position position="26"/>
    </location>
    <ligand>
        <name>Mg(2+)</name>
        <dbReference type="ChEBI" id="CHEBI:18420"/>
    </ligand>
</feature>
<feature type="binding site" evidence="2">
    <location>
        <begin position="81"/>
        <end position="85"/>
    </location>
    <ligand>
        <name>GTP</name>
        <dbReference type="ChEBI" id="CHEBI:37565"/>
    </ligand>
</feature>
<feature type="binding site" evidence="2">
    <location>
        <begin position="136"/>
        <end position="139"/>
    </location>
    <ligand>
        <name>GTP</name>
        <dbReference type="ChEBI" id="CHEBI:37565"/>
    </ligand>
</feature>
<reference key="1">
    <citation type="journal article" date="1993" name="Antonie Van Leeuwenhoek">
        <title>Phylogenetic relationships of Bacteria based on comparative sequence analysis of elongation factor Tu and ATP-synthase beta-subunit genes.</title>
        <authorList>
            <person name="Ludwig W."/>
            <person name="Neumaier J."/>
            <person name="Klugbauer N."/>
            <person name="Brockmann E."/>
            <person name="Roller C."/>
            <person name="Klugbauer S."/>
            <person name="Reetz K."/>
            <person name="Schachtner I."/>
            <person name="Ludvigsen A."/>
            <person name="Bachleitner M."/>
            <person name="Fischer U."/>
            <person name="Schleifer K.H."/>
        </authorList>
    </citation>
    <scope>NUCLEOTIDE SEQUENCE [GENOMIC DNA]</scope>
</reference>
<reference key="2">
    <citation type="submission" date="2008-06" db="EMBL/GenBank/DDBJ databases">
        <title>Complete sequence of Chlorobaculum parvum NCIB 8327.</title>
        <authorList>
            <consortium name="US DOE Joint Genome Institute"/>
            <person name="Lucas S."/>
            <person name="Copeland A."/>
            <person name="Lapidus A."/>
            <person name="Glavina del Rio T."/>
            <person name="Dalin E."/>
            <person name="Tice H."/>
            <person name="Bruce D."/>
            <person name="Goodwin L."/>
            <person name="Pitluck S."/>
            <person name="Schmutz J."/>
            <person name="Larimer F."/>
            <person name="Land M."/>
            <person name="Hauser L."/>
            <person name="Kyrpides N."/>
            <person name="Mikhailova N."/>
            <person name="Zhao F."/>
            <person name="Li T."/>
            <person name="Liu Z."/>
            <person name="Overmann J."/>
            <person name="Bryant D.A."/>
            <person name="Richardson P."/>
        </authorList>
    </citation>
    <scope>NUCLEOTIDE SEQUENCE [LARGE SCALE GENOMIC DNA]</scope>
    <source>
        <strain>DSM 263 / NCIMB 8327</strain>
    </source>
</reference>
<comment type="function">
    <text evidence="2">GTP hydrolase that promotes the GTP-dependent binding of aminoacyl-tRNA to the A-site of ribosomes during protein biosynthesis.</text>
</comment>
<comment type="catalytic activity">
    <reaction evidence="2">
        <text>GTP + H2O = GDP + phosphate + H(+)</text>
        <dbReference type="Rhea" id="RHEA:19669"/>
        <dbReference type="ChEBI" id="CHEBI:15377"/>
        <dbReference type="ChEBI" id="CHEBI:15378"/>
        <dbReference type="ChEBI" id="CHEBI:37565"/>
        <dbReference type="ChEBI" id="CHEBI:43474"/>
        <dbReference type="ChEBI" id="CHEBI:58189"/>
        <dbReference type="EC" id="3.6.5.3"/>
    </reaction>
    <physiologicalReaction direction="left-to-right" evidence="2">
        <dbReference type="Rhea" id="RHEA:19670"/>
    </physiologicalReaction>
</comment>
<comment type="subunit">
    <text evidence="2">Monomer.</text>
</comment>
<comment type="subcellular location">
    <subcellularLocation>
        <location evidence="2">Cytoplasm</location>
    </subcellularLocation>
</comment>
<comment type="similarity">
    <text evidence="2">Belongs to the TRAFAC class translation factor GTPase superfamily. Classic translation factor GTPase family. EF-Tu/EF-1A subfamily.</text>
</comment>
<protein>
    <recommendedName>
        <fullName evidence="2">Elongation factor Tu</fullName>
        <shortName evidence="2">EF-Tu</shortName>
        <ecNumber evidence="2">3.6.5.3</ecNumber>
    </recommendedName>
</protein>
<sequence>MAKESYKRDKPHVNIGTIGHVDHGKTTLTAAITSVLAKSGKAAAREFGDIDKAPEERERGITISTAHVEYQTDKRHYAHIDCPGHADYIKNMITGAAQMDGAILVVAGTDGPMPQTREHILLARQVNVPALVVFLNKVDIADPELLELVEMELRELLTEYGFPGDDIPIIKGSALNALNGDPEGEKAIMELMDAVDDYIPEPVRDVDKPFLMPVEDVFSISGRGTVGTGRIERGIIKVGNEVEIVGIKPTTKSVVTGIEMFQKTLDEGQAGDNAGLLLRGVDKEALERGMVIAKPGSITPHTKFKAEVYILKKEEGGRHTPFFNGYRPQFYFRTTDVTGSVTLPEGVEMVMPGDNLSVDVELIAPIAMEESLRFAIREGGRTVGAGSVTKIVE</sequence>
<organism>
    <name type="scientific">Chlorobaculum parvum (strain DSM 263 / NCIMB 8327)</name>
    <name type="common">Chlorobium vibrioforme subsp. thiosulfatophilum</name>
    <dbReference type="NCBI Taxonomy" id="517417"/>
    <lineage>
        <taxon>Bacteria</taxon>
        <taxon>Pseudomonadati</taxon>
        <taxon>Chlorobiota</taxon>
        <taxon>Chlorobiia</taxon>
        <taxon>Chlorobiales</taxon>
        <taxon>Chlorobiaceae</taxon>
        <taxon>Chlorobaculum</taxon>
    </lineage>
</organism>
<name>EFTU_CHLP8</name>
<accession>P42473</accession>
<accession>B3QR65</accession>